<sequence length="222" mass="24505">MLPHGLIVSCQALADEPLHSSFIMSKMALAAYEGGAVGIRANTKEDILAIKETVDLPVIGIVKRDYDHSDVFITATSKEVDELIESQCEVIALDATLQQRPKETLDELVSYIRTHAPNVEIMADIATVEEAKNAARLGFDYIGTTLHGYTSYTQGQLLYQNDFQFLKDVLQSVDAKVIAEGNVITPDMYKRVMDLGVHCSVVGGAITRPKEITKRFVQVMED</sequence>
<name>NANE_STAAN</name>
<feature type="chain" id="PRO_0000179799" description="Putative N-acetylmannosamine-6-phosphate 2-epimerase">
    <location>
        <begin position="1"/>
        <end position="222"/>
    </location>
</feature>
<feature type="strand" evidence="2">
    <location>
        <begin position="4"/>
        <end position="9"/>
    </location>
</feature>
<feature type="helix" evidence="2">
    <location>
        <begin position="21"/>
        <end position="34"/>
    </location>
</feature>
<feature type="strand" evidence="2">
    <location>
        <begin position="37"/>
        <end position="43"/>
    </location>
</feature>
<feature type="helix" evidence="2">
    <location>
        <begin position="44"/>
        <end position="53"/>
    </location>
</feature>
<feature type="strand" evidence="2">
    <location>
        <begin position="58"/>
        <end position="61"/>
    </location>
</feature>
<feature type="helix" evidence="2">
    <location>
        <begin position="77"/>
        <end position="86"/>
    </location>
</feature>
<feature type="strand" evidence="2">
    <location>
        <begin position="89"/>
        <end position="94"/>
    </location>
</feature>
<feature type="strand" evidence="2">
    <location>
        <begin position="101"/>
        <end position="103"/>
    </location>
</feature>
<feature type="helix" evidence="2">
    <location>
        <begin position="105"/>
        <end position="115"/>
    </location>
</feature>
<feature type="strand" evidence="2">
    <location>
        <begin position="119"/>
        <end position="124"/>
    </location>
</feature>
<feature type="helix" evidence="2">
    <location>
        <begin position="128"/>
        <end position="136"/>
    </location>
</feature>
<feature type="strand" evidence="2">
    <location>
        <begin position="140"/>
        <end position="143"/>
    </location>
</feature>
<feature type="turn" evidence="2">
    <location>
        <begin position="145"/>
        <end position="148"/>
    </location>
</feature>
<feature type="helix" evidence="2">
    <location>
        <begin position="160"/>
        <end position="172"/>
    </location>
</feature>
<feature type="strand" evidence="2">
    <location>
        <begin position="175"/>
        <end position="182"/>
    </location>
</feature>
<feature type="helix" evidence="2">
    <location>
        <begin position="186"/>
        <end position="194"/>
    </location>
</feature>
<feature type="strand" evidence="2">
    <location>
        <begin position="198"/>
        <end position="202"/>
    </location>
</feature>
<feature type="helix" evidence="2">
    <location>
        <begin position="204"/>
        <end position="207"/>
    </location>
</feature>
<feature type="helix" evidence="2">
    <location>
        <begin position="209"/>
        <end position="218"/>
    </location>
</feature>
<proteinExistence type="evidence at protein level"/>
<organism>
    <name type="scientific">Staphylococcus aureus (strain N315)</name>
    <dbReference type="NCBI Taxonomy" id="158879"/>
    <lineage>
        <taxon>Bacteria</taxon>
        <taxon>Bacillati</taxon>
        <taxon>Bacillota</taxon>
        <taxon>Bacilli</taxon>
        <taxon>Bacillales</taxon>
        <taxon>Staphylococcaceae</taxon>
        <taxon>Staphylococcus</taxon>
    </lineage>
</organism>
<protein>
    <recommendedName>
        <fullName evidence="1">Putative N-acetylmannosamine-6-phosphate 2-epimerase</fullName>
        <ecNumber evidence="1">5.1.3.9</ecNumber>
    </recommendedName>
    <alternativeName>
        <fullName evidence="1">ManNAc-6-P epimerase</fullName>
    </alternativeName>
</protein>
<keyword id="KW-0002">3D-structure</keyword>
<keyword id="KW-0119">Carbohydrate metabolism</keyword>
<keyword id="KW-0413">Isomerase</keyword>
<accession>P65517</accession>
<accession>Q99WQ8</accession>
<reference key="1">
    <citation type="journal article" date="2001" name="Lancet">
        <title>Whole genome sequencing of meticillin-resistant Staphylococcus aureus.</title>
        <authorList>
            <person name="Kuroda M."/>
            <person name="Ohta T."/>
            <person name="Uchiyama I."/>
            <person name="Baba T."/>
            <person name="Yuzawa H."/>
            <person name="Kobayashi I."/>
            <person name="Cui L."/>
            <person name="Oguchi A."/>
            <person name="Aoki K."/>
            <person name="Nagai Y."/>
            <person name="Lian J.-Q."/>
            <person name="Ito T."/>
            <person name="Kanamori M."/>
            <person name="Matsumaru H."/>
            <person name="Maruyama A."/>
            <person name="Murakami H."/>
            <person name="Hosoyama A."/>
            <person name="Mizutani-Ui Y."/>
            <person name="Takahashi N.K."/>
            <person name="Sawano T."/>
            <person name="Inoue R."/>
            <person name="Kaito C."/>
            <person name="Sekimizu K."/>
            <person name="Hirakawa H."/>
            <person name="Kuhara S."/>
            <person name="Goto S."/>
            <person name="Yabuzaki J."/>
            <person name="Kanehisa M."/>
            <person name="Yamashita A."/>
            <person name="Oshima K."/>
            <person name="Furuya K."/>
            <person name="Yoshino C."/>
            <person name="Shiba T."/>
            <person name="Hattori M."/>
            <person name="Ogasawara N."/>
            <person name="Hayashi H."/>
            <person name="Hiramatsu K."/>
        </authorList>
    </citation>
    <scope>NUCLEOTIDE SEQUENCE [LARGE SCALE GENOMIC DNA]</scope>
    <source>
        <strain>N315</strain>
    </source>
</reference>
<comment type="function">
    <text evidence="1">Converts N-acetylmannosamine-6-phosphate (ManNAc-6-P) to N-acetylglucosamine-6-phosphate (GlcNAc-6-P).</text>
</comment>
<comment type="catalytic activity">
    <reaction evidence="1">
        <text>an N-acyl-D-glucosamine 6-phosphate = an N-acyl-D-mannosamine 6-phosphate</text>
        <dbReference type="Rhea" id="RHEA:23932"/>
        <dbReference type="ChEBI" id="CHEBI:57599"/>
        <dbReference type="ChEBI" id="CHEBI:57666"/>
        <dbReference type="EC" id="5.1.3.9"/>
    </reaction>
</comment>
<comment type="pathway">
    <text evidence="1">Amino-sugar metabolism; N-acetylneuraminate degradation; D-fructose 6-phosphate from N-acetylneuraminate: step 3/5.</text>
</comment>
<comment type="similarity">
    <text evidence="1">Belongs to the NanE family.</text>
</comment>
<gene>
    <name evidence="1" type="primary">nanE</name>
    <name type="ordered locus">SA0307</name>
</gene>
<dbReference type="EC" id="5.1.3.9" evidence="1"/>
<dbReference type="EMBL" id="BA000018">
    <property type="protein sequence ID" value="BAB41531.1"/>
    <property type="molecule type" value="Genomic_DNA"/>
</dbReference>
<dbReference type="PIR" id="H89796">
    <property type="entry name" value="H89796"/>
</dbReference>
<dbReference type="RefSeq" id="WP_000936718.1">
    <property type="nucleotide sequence ID" value="NC_002745.2"/>
</dbReference>
<dbReference type="PDB" id="1Y0E">
    <property type="method" value="X-ray"/>
    <property type="resolution" value="1.95 A"/>
    <property type="chains" value="A/B=1-222"/>
</dbReference>
<dbReference type="PDBsum" id="1Y0E"/>
<dbReference type="SMR" id="P65517"/>
<dbReference type="EnsemblBacteria" id="BAB41531">
    <property type="protein sequence ID" value="BAB41531"/>
    <property type="gene ID" value="BAB41531"/>
</dbReference>
<dbReference type="KEGG" id="sau:SA0307"/>
<dbReference type="HOGENOM" id="CLU_086300_1_0_9"/>
<dbReference type="UniPathway" id="UPA00629">
    <property type="reaction ID" value="UER00682"/>
</dbReference>
<dbReference type="EvolutionaryTrace" id="P65517"/>
<dbReference type="GO" id="GO:0005829">
    <property type="term" value="C:cytosol"/>
    <property type="evidence" value="ECO:0007669"/>
    <property type="project" value="TreeGrafter"/>
</dbReference>
<dbReference type="GO" id="GO:0047465">
    <property type="term" value="F:N-acylglucosamine-6-phosphate 2-epimerase activity"/>
    <property type="evidence" value="ECO:0007669"/>
    <property type="project" value="UniProtKB-EC"/>
</dbReference>
<dbReference type="GO" id="GO:0005975">
    <property type="term" value="P:carbohydrate metabolic process"/>
    <property type="evidence" value="ECO:0007669"/>
    <property type="project" value="UniProtKB-UniRule"/>
</dbReference>
<dbReference type="GO" id="GO:0006053">
    <property type="term" value="P:N-acetylmannosamine catabolic process"/>
    <property type="evidence" value="ECO:0007669"/>
    <property type="project" value="TreeGrafter"/>
</dbReference>
<dbReference type="GO" id="GO:0019262">
    <property type="term" value="P:N-acetylneuraminate catabolic process"/>
    <property type="evidence" value="ECO:0007669"/>
    <property type="project" value="UniProtKB-UniRule"/>
</dbReference>
<dbReference type="CDD" id="cd04729">
    <property type="entry name" value="NanE"/>
    <property type="match status" value="1"/>
</dbReference>
<dbReference type="FunFam" id="3.20.20.70:FF:000035">
    <property type="entry name" value="Putative N-acetylmannosamine-6-phosphate 2-epimerase"/>
    <property type="match status" value="1"/>
</dbReference>
<dbReference type="Gene3D" id="3.20.20.70">
    <property type="entry name" value="Aldolase class I"/>
    <property type="match status" value="1"/>
</dbReference>
<dbReference type="HAMAP" id="MF_01235">
    <property type="entry name" value="ManNAc6P_epimer"/>
    <property type="match status" value="1"/>
</dbReference>
<dbReference type="InterPro" id="IPR013785">
    <property type="entry name" value="Aldolase_TIM"/>
</dbReference>
<dbReference type="InterPro" id="IPR007260">
    <property type="entry name" value="NanE"/>
</dbReference>
<dbReference type="InterPro" id="IPR011060">
    <property type="entry name" value="RibuloseP-bd_barrel"/>
</dbReference>
<dbReference type="NCBIfam" id="NF002231">
    <property type="entry name" value="PRK01130.1"/>
    <property type="match status" value="1"/>
</dbReference>
<dbReference type="PANTHER" id="PTHR36204">
    <property type="entry name" value="N-ACETYLMANNOSAMINE-6-PHOSPHATE 2-EPIMERASE-RELATED"/>
    <property type="match status" value="1"/>
</dbReference>
<dbReference type="PANTHER" id="PTHR36204:SF1">
    <property type="entry name" value="N-ACETYLMANNOSAMINE-6-PHOSPHATE 2-EPIMERASE-RELATED"/>
    <property type="match status" value="1"/>
</dbReference>
<dbReference type="Pfam" id="PF04131">
    <property type="entry name" value="NanE"/>
    <property type="match status" value="1"/>
</dbReference>
<dbReference type="SUPFAM" id="SSF51366">
    <property type="entry name" value="Ribulose-phoshate binding barrel"/>
    <property type="match status" value="1"/>
</dbReference>
<evidence type="ECO:0000255" key="1">
    <source>
        <dbReference type="HAMAP-Rule" id="MF_01235"/>
    </source>
</evidence>
<evidence type="ECO:0007829" key="2">
    <source>
        <dbReference type="PDB" id="1Y0E"/>
    </source>
</evidence>